<geneLocation type="chloroplast"/>
<gene>
    <name evidence="1" type="primary">ndhJ</name>
</gene>
<proteinExistence type="inferred from homology"/>
<keyword id="KW-0150">Chloroplast</keyword>
<keyword id="KW-0472">Membrane</keyword>
<keyword id="KW-0520">NAD</keyword>
<keyword id="KW-0521">NADP</keyword>
<keyword id="KW-0934">Plastid</keyword>
<keyword id="KW-0618">Plastoquinone</keyword>
<keyword id="KW-0874">Quinone</keyword>
<keyword id="KW-0793">Thylakoid</keyword>
<keyword id="KW-1278">Translocase</keyword>
<keyword id="KW-0813">Transport</keyword>
<protein>
    <recommendedName>
        <fullName evidence="1">NAD(P)H-quinone oxidoreductase subunit J, chloroplastic</fullName>
        <ecNumber evidence="1">7.1.1.-</ecNumber>
    </recommendedName>
    <alternativeName>
        <fullName>NAD(P)H dehydrogenase subunit J</fullName>
    </alternativeName>
    <alternativeName>
        <fullName evidence="1">NADH-plastoquinone oxidoreductase subunit J</fullName>
    </alternativeName>
</protein>
<accession>Q49KZ5</accession>
<organism>
    <name type="scientific">Eucalyptus globulus subsp. globulus</name>
    <name type="common">Tasmanian blue gum</name>
    <dbReference type="NCBI Taxonomy" id="71271"/>
    <lineage>
        <taxon>Eukaryota</taxon>
        <taxon>Viridiplantae</taxon>
        <taxon>Streptophyta</taxon>
        <taxon>Embryophyta</taxon>
        <taxon>Tracheophyta</taxon>
        <taxon>Spermatophyta</taxon>
        <taxon>Magnoliopsida</taxon>
        <taxon>eudicotyledons</taxon>
        <taxon>Gunneridae</taxon>
        <taxon>Pentapetalae</taxon>
        <taxon>rosids</taxon>
        <taxon>malvids</taxon>
        <taxon>Myrtales</taxon>
        <taxon>Myrtaceae</taxon>
        <taxon>Myrtoideae</taxon>
        <taxon>Eucalypteae</taxon>
        <taxon>Eucalyptus</taxon>
    </lineage>
</organism>
<evidence type="ECO:0000255" key="1">
    <source>
        <dbReference type="HAMAP-Rule" id="MF_01357"/>
    </source>
</evidence>
<sequence length="158" mass="18608">MQGRLSAWLVKHGLVHRSLGFDYQGIETLQIKPEDWHSIAVILYVYGYNYLRSQCAYDVAPGGLLASVYHLTRIEYGVDQPEEVCIKVFAPRRNPRIPSVFWIWKSADFQERESYDMLGICYDTHPRLKRILMPETWIGWPLRKDYIAPNFYEIQDAH</sequence>
<feature type="chain" id="PRO_0000358265" description="NAD(P)H-quinone oxidoreductase subunit J, chloroplastic">
    <location>
        <begin position="1"/>
        <end position="158"/>
    </location>
</feature>
<comment type="function">
    <text evidence="1">NDH shuttles electrons from NAD(P)H:plastoquinone, via FMN and iron-sulfur (Fe-S) centers, to quinones in the photosynthetic chain and possibly in a chloroplast respiratory chain. The immediate electron acceptor for the enzyme in this species is believed to be plastoquinone. Couples the redox reaction to proton translocation, and thus conserves the redox energy in a proton gradient.</text>
</comment>
<comment type="catalytic activity">
    <reaction evidence="1">
        <text>a plastoquinone + NADH + (n+1) H(+)(in) = a plastoquinol + NAD(+) + n H(+)(out)</text>
        <dbReference type="Rhea" id="RHEA:42608"/>
        <dbReference type="Rhea" id="RHEA-COMP:9561"/>
        <dbReference type="Rhea" id="RHEA-COMP:9562"/>
        <dbReference type="ChEBI" id="CHEBI:15378"/>
        <dbReference type="ChEBI" id="CHEBI:17757"/>
        <dbReference type="ChEBI" id="CHEBI:57540"/>
        <dbReference type="ChEBI" id="CHEBI:57945"/>
        <dbReference type="ChEBI" id="CHEBI:62192"/>
    </reaction>
</comment>
<comment type="catalytic activity">
    <reaction evidence="1">
        <text>a plastoquinone + NADPH + (n+1) H(+)(in) = a plastoquinol + NADP(+) + n H(+)(out)</text>
        <dbReference type="Rhea" id="RHEA:42612"/>
        <dbReference type="Rhea" id="RHEA-COMP:9561"/>
        <dbReference type="Rhea" id="RHEA-COMP:9562"/>
        <dbReference type="ChEBI" id="CHEBI:15378"/>
        <dbReference type="ChEBI" id="CHEBI:17757"/>
        <dbReference type="ChEBI" id="CHEBI:57783"/>
        <dbReference type="ChEBI" id="CHEBI:58349"/>
        <dbReference type="ChEBI" id="CHEBI:62192"/>
    </reaction>
</comment>
<comment type="subunit">
    <text evidence="1">NDH is composed of at least 16 different subunits, 5 of which are encoded in the nucleus.</text>
</comment>
<comment type="subcellular location">
    <subcellularLocation>
        <location evidence="1">Plastid</location>
        <location evidence="1">Chloroplast thylakoid membrane</location>
        <topology evidence="1">Peripheral membrane protein</topology>
        <orientation evidence="1">Stromal side</orientation>
    </subcellularLocation>
</comment>
<comment type="similarity">
    <text evidence="1">Belongs to the complex I 30 kDa subunit family.</text>
</comment>
<name>NDHJ_EUCGG</name>
<dbReference type="EC" id="7.1.1.-" evidence="1"/>
<dbReference type="EMBL" id="AY780259">
    <property type="protein sequence ID" value="AAX21032.1"/>
    <property type="molecule type" value="Genomic_DNA"/>
</dbReference>
<dbReference type="RefSeq" id="YP_636302.1">
    <property type="nucleotide sequence ID" value="NC_008115.1"/>
</dbReference>
<dbReference type="SMR" id="Q49KZ5"/>
<dbReference type="GeneID" id="4108395"/>
<dbReference type="GO" id="GO:0009535">
    <property type="term" value="C:chloroplast thylakoid membrane"/>
    <property type="evidence" value="ECO:0007669"/>
    <property type="project" value="UniProtKB-SubCell"/>
</dbReference>
<dbReference type="GO" id="GO:0008137">
    <property type="term" value="F:NADH dehydrogenase (ubiquinone) activity"/>
    <property type="evidence" value="ECO:0007669"/>
    <property type="project" value="InterPro"/>
</dbReference>
<dbReference type="GO" id="GO:0048038">
    <property type="term" value="F:quinone binding"/>
    <property type="evidence" value="ECO:0007669"/>
    <property type="project" value="UniProtKB-KW"/>
</dbReference>
<dbReference type="GO" id="GO:0019684">
    <property type="term" value="P:photosynthesis, light reaction"/>
    <property type="evidence" value="ECO:0007669"/>
    <property type="project" value="UniProtKB-UniRule"/>
</dbReference>
<dbReference type="FunFam" id="3.30.460.80:FF:000004">
    <property type="entry name" value="NAD(P)H-quinone oxidoreductase subunit J, chloroplastic"/>
    <property type="match status" value="1"/>
</dbReference>
<dbReference type="Gene3D" id="3.30.460.80">
    <property type="entry name" value="NADH:ubiquinone oxidoreductase, 30kDa subunit"/>
    <property type="match status" value="1"/>
</dbReference>
<dbReference type="HAMAP" id="MF_01357">
    <property type="entry name" value="NDH1_NuoC"/>
    <property type="match status" value="1"/>
</dbReference>
<dbReference type="InterPro" id="IPR010218">
    <property type="entry name" value="NADH_DH_suC"/>
</dbReference>
<dbReference type="InterPro" id="IPR037232">
    <property type="entry name" value="NADH_quin_OxRdtase_su_C/D-like"/>
</dbReference>
<dbReference type="InterPro" id="IPR001268">
    <property type="entry name" value="NADH_UbQ_OxRdtase_30kDa_su"/>
</dbReference>
<dbReference type="InterPro" id="IPR020396">
    <property type="entry name" value="NADH_UbQ_OxRdtase_CS"/>
</dbReference>
<dbReference type="NCBIfam" id="NF009141">
    <property type="entry name" value="PRK12494.1"/>
    <property type="match status" value="1"/>
</dbReference>
<dbReference type="PANTHER" id="PTHR10884:SF14">
    <property type="entry name" value="NADH DEHYDROGENASE [UBIQUINONE] IRON-SULFUR PROTEIN 3, MITOCHONDRIAL"/>
    <property type="match status" value="1"/>
</dbReference>
<dbReference type="PANTHER" id="PTHR10884">
    <property type="entry name" value="NADH DEHYDROGENASE UBIQUINONE IRON-SULFUR PROTEIN 3"/>
    <property type="match status" value="1"/>
</dbReference>
<dbReference type="Pfam" id="PF00329">
    <property type="entry name" value="Complex1_30kDa"/>
    <property type="match status" value="1"/>
</dbReference>
<dbReference type="SUPFAM" id="SSF143243">
    <property type="entry name" value="Nqo5-like"/>
    <property type="match status" value="1"/>
</dbReference>
<dbReference type="PROSITE" id="PS00542">
    <property type="entry name" value="COMPLEX1_30K"/>
    <property type="match status" value="1"/>
</dbReference>
<reference key="1">
    <citation type="journal article" date="2005" name="DNA Res.">
        <title>Complete nucleotide sequence of the chloroplast genome from the Tasmanian blue gum, Eucalyptus globulus (Myrtaceae).</title>
        <authorList>
            <person name="Steane D.A."/>
        </authorList>
    </citation>
    <scope>NUCLEOTIDE SEQUENCE [LARGE SCALE GENOMIC DNA]</scope>
</reference>